<reference key="1">
    <citation type="journal article" date="2005" name="Nature">
        <title>The genome of the social amoeba Dictyostelium discoideum.</title>
        <authorList>
            <person name="Eichinger L."/>
            <person name="Pachebat J.A."/>
            <person name="Gloeckner G."/>
            <person name="Rajandream M.A."/>
            <person name="Sucgang R."/>
            <person name="Berriman M."/>
            <person name="Song J."/>
            <person name="Olsen R."/>
            <person name="Szafranski K."/>
            <person name="Xu Q."/>
            <person name="Tunggal B."/>
            <person name="Kummerfeld S."/>
            <person name="Madera M."/>
            <person name="Konfortov B.A."/>
            <person name="Rivero F."/>
            <person name="Bankier A.T."/>
            <person name="Lehmann R."/>
            <person name="Hamlin N."/>
            <person name="Davies R."/>
            <person name="Gaudet P."/>
            <person name="Fey P."/>
            <person name="Pilcher K."/>
            <person name="Chen G."/>
            <person name="Saunders D."/>
            <person name="Sodergren E.J."/>
            <person name="Davis P."/>
            <person name="Kerhornou A."/>
            <person name="Nie X."/>
            <person name="Hall N."/>
            <person name="Anjard C."/>
            <person name="Hemphill L."/>
            <person name="Bason N."/>
            <person name="Farbrother P."/>
            <person name="Desany B."/>
            <person name="Just E."/>
            <person name="Morio T."/>
            <person name="Rost R."/>
            <person name="Churcher C.M."/>
            <person name="Cooper J."/>
            <person name="Haydock S."/>
            <person name="van Driessche N."/>
            <person name="Cronin A."/>
            <person name="Goodhead I."/>
            <person name="Muzny D.M."/>
            <person name="Mourier T."/>
            <person name="Pain A."/>
            <person name="Lu M."/>
            <person name="Harper D."/>
            <person name="Lindsay R."/>
            <person name="Hauser H."/>
            <person name="James K.D."/>
            <person name="Quiles M."/>
            <person name="Madan Babu M."/>
            <person name="Saito T."/>
            <person name="Buchrieser C."/>
            <person name="Wardroper A."/>
            <person name="Felder M."/>
            <person name="Thangavelu M."/>
            <person name="Johnson D."/>
            <person name="Knights A."/>
            <person name="Loulseged H."/>
            <person name="Mungall K.L."/>
            <person name="Oliver K."/>
            <person name="Price C."/>
            <person name="Quail M.A."/>
            <person name="Urushihara H."/>
            <person name="Hernandez J."/>
            <person name="Rabbinowitsch E."/>
            <person name="Steffen D."/>
            <person name="Sanders M."/>
            <person name="Ma J."/>
            <person name="Kohara Y."/>
            <person name="Sharp S."/>
            <person name="Simmonds M.N."/>
            <person name="Spiegler S."/>
            <person name="Tivey A."/>
            <person name="Sugano S."/>
            <person name="White B."/>
            <person name="Walker D."/>
            <person name="Woodward J.R."/>
            <person name="Winckler T."/>
            <person name="Tanaka Y."/>
            <person name="Shaulsky G."/>
            <person name="Schleicher M."/>
            <person name="Weinstock G.M."/>
            <person name="Rosenthal A."/>
            <person name="Cox E.C."/>
            <person name="Chisholm R.L."/>
            <person name="Gibbs R.A."/>
            <person name="Loomis W.F."/>
            <person name="Platzer M."/>
            <person name="Kay R.R."/>
            <person name="Williams J.G."/>
            <person name="Dear P.H."/>
            <person name="Noegel A.A."/>
            <person name="Barrell B.G."/>
            <person name="Kuspa A."/>
        </authorList>
    </citation>
    <scope>NUCLEOTIDE SEQUENCE [LARGE SCALE GENOMIC DNA]</scope>
    <source>
        <strain>AX4</strain>
    </source>
</reference>
<gene>
    <name type="primary">aprt</name>
    <name type="ORF">DDB_G0270174</name>
</gene>
<organism>
    <name type="scientific">Dictyostelium discoideum</name>
    <name type="common">Social amoeba</name>
    <dbReference type="NCBI Taxonomy" id="44689"/>
    <lineage>
        <taxon>Eukaryota</taxon>
        <taxon>Amoebozoa</taxon>
        <taxon>Evosea</taxon>
        <taxon>Eumycetozoa</taxon>
        <taxon>Dictyostelia</taxon>
        <taxon>Dictyosteliales</taxon>
        <taxon>Dictyosteliaceae</taxon>
        <taxon>Dictyostelium</taxon>
    </lineage>
</organism>
<feature type="chain" id="PRO_0000329379" description="Probable adenine phosphoribosyltransferase">
    <location>
        <begin position="1"/>
        <end position="199"/>
    </location>
</feature>
<evidence type="ECO:0000250" key="1"/>
<evidence type="ECO:0000305" key="2"/>
<accession>Q55C82</accession>
<comment type="function">
    <text evidence="1">Catalyzes a salvage reaction resulting in the formation of AMP, that is energically less costly than de novo synthesis.</text>
</comment>
<comment type="catalytic activity">
    <reaction>
        <text>AMP + diphosphate = 5-phospho-alpha-D-ribose 1-diphosphate + adenine</text>
        <dbReference type="Rhea" id="RHEA:16609"/>
        <dbReference type="ChEBI" id="CHEBI:16708"/>
        <dbReference type="ChEBI" id="CHEBI:33019"/>
        <dbReference type="ChEBI" id="CHEBI:58017"/>
        <dbReference type="ChEBI" id="CHEBI:456215"/>
        <dbReference type="EC" id="2.4.2.7"/>
    </reaction>
</comment>
<comment type="pathway">
    <text>Purine metabolism; AMP biosynthesis via salvage pathway; AMP from adenine: step 1/1.</text>
</comment>
<comment type="subunit">
    <text evidence="1">Homodimer.</text>
</comment>
<comment type="subcellular location">
    <subcellularLocation>
        <location evidence="1">Cytoplasm</location>
    </subcellularLocation>
</comment>
<comment type="similarity">
    <text evidence="2">Belongs to the purine/pyrimidine phosphoribosyltransferase family.</text>
</comment>
<dbReference type="EC" id="2.4.2.7"/>
<dbReference type="EMBL" id="AAFI02000005">
    <property type="protein sequence ID" value="EAL72437.1"/>
    <property type="molecule type" value="Genomic_DNA"/>
</dbReference>
<dbReference type="RefSeq" id="XP_646599.1">
    <property type="nucleotide sequence ID" value="XM_641507.1"/>
</dbReference>
<dbReference type="SMR" id="Q55C82"/>
<dbReference type="FunCoup" id="Q55C82">
    <property type="interactions" value="103"/>
</dbReference>
<dbReference type="STRING" id="44689.Q55C82"/>
<dbReference type="PaxDb" id="44689-DDB0230173"/>
<dbReference type="EnsemblProtists" id="EAL72437">
    <property type="protein sequence ID" value="EAL72437"/>
    <property type="gene ID" value="DDB_G0270174"/>
</dbReference>
<dbReference type="GeneID" id="8617570"/>
<dbReference type="KEGG" id="ddi:DDB_G0270174"/>
<dbReference type="dictyBase" id="DDB_G0270174">
    <property type="gene designation" value="aprt"/>
</dbReference>
<dbReference type="VEuPathDB" id="AmoebaDB:DDB_G0270174"/>
<dbReference type="eggNOG" id="KOG1712">
    <property type="taxonomic scope" value="Eukaryota"/>
</dbReference>
<dbReference type="HOGENOM" id="CLU_063339_3_0_1"/>
<dbReference type="InParanoid" id="Q55C82"/>
<dbReference type="OMA" id="QAYDLEY"/>
<dbReference type="PhylomeDB" id="Q55C82"/>
<dbReference type="UniPathway" id="UPA00588">
    <property type="reaction ID" value="UER00646"/>
</dbReference>
<dbReference type="PRO" id="PR:Q55C82"/>
<dbReference type="Proteomes" id="UP000002195">
    <property type="component" value="Chromosome 1"/>
</dbReference>
<dbReference type="GO" id="GO:0005737">
    <property type="term" value="C:cytoplasm"/>
    <property type="evidence" value="ECO:0007669"/>
    <property type="project" value="UniProtKB-SubCell"/>
</dbReference>
<dbReference type="GO" id="GO:0003999">
    <property type="term" value="F:adenine phosphoribosyltransferase activity"/>
    <property type="evidence" value="ECO:0000250"/>
    <property type="project" value="dictyBase"/>
</dbReference>
<dbReference type="GO" id="GO:0006168">
    <property type="term" value="P:adenine salvage"/>
    <property type="evidence" value="ECO:0000250"/>
    <property type="project" value="dictyBase"/>
</dbReference>
<dbReference type="GO" id="GO:0044209">
    <property type="term" value="P:AMP salvage"/>
    <property type="evidence" value="ECO:0007669"/>
    <property type="project" value="UniProtKB-UniPathway"/>
</dbReference>
<dbReference type="GO" id="GO:0006166">
    <property type="term" value="P:purine ribonucleoside salvage"/>
    <property type="evidence" value="ECO:0007669"/>
    <property type="project" value="UniProtKB-KW"/>
</dbReference>
<dbReference type="CDD" id="cd06223">
    <property type="entry name" value="PRTases_typeI"/>
    <property type="match status" value="1"/>
</dbReference>
<dbReference type="FunFam" id="3.40.50.2020:FF:000113">
    <property type="entry name" value="Probable adenine phosphoribosyltransferase"/>
    <property type="match status" value="1"/>
</dbReference>
<dbReference type="Gene3D" id="3.40.50.2020">
    <property type="match status" value="1"/>
</dbReference>
<dbReference type="InterPro" id="IPR050120">
    <property type="entry name" value="Adenine_PRTase"/>
</dbReference>
<dbReference type="InterPro" id="IPR000836">
    <property type="entry name" value="PRibTrfase_dom"/>
</dbReference>
<dbReference type="InterPro" id="IPR029057">
    <property type="entry name" value="PRTase-like"/>
</dbReference>
<dbReference type="NCBIfam" id="NF002636">
    <property type="entry name" value="PRK02304.1-5"/>
    <property type="match status" value="1"/>
</dbReference>
<dbReference type="PANTHER" id="PTHR11776">
    <property type="entry name" value="ADENINE PHOSPHORIBOSYLTRANSFERASE"/>
    <property type="match status" value="1"/>
</dbReference>
<dbReference type="PANTHER" id="PTHR11776:SF7">
    <property type="entry name" value="PHOSPHORIBOSYLTRANSFERASE DOMAIN-CONTAINING PROTEIN"/>
    <property type="match status" value="1"/>
</dbReference>
<dbReference type="Pfam" id="PF00156">
    <property type="entry name" value="Pribosyltran"/>
    <property type="match status" value="1"/>
</dbReference>
<dbReference type="SUPFAM" id="SSF53271">
    <property type="entry name" value="PRTase-like"/>
    <property type="match status" value="1"/>
</dbReference>
<keyword id="KW-0963">Cytoplasm</keyword>
<keyword id="KW-0328">Glycosyltransferase</keyword>
<keyword id="KW-0660">Purine salvage</keyword>
<keyword id="KW-1185">Reference proteome</keyword>
<keyword id="KW-0808">Transferase</keyword>
<name>APT_DICDI</name>
<proteinExistence type="inferred from homology"/>
<protein>
    <recommendedName>
        <fullName>Probable adenine phosphoribosyltransferase</fullName>
        <shortName>APRT</shortName>
        <ecNumber>2.4.2.7</ecNumber>
    </recommendedName>
</protein>
<sequence length="199" mass="22791">MQESKYQELQKQAEKSVKESMTLFQDWPNKGVGFQDISNLFLCYDKFSDVLDYYEHRFSDVDLVVGLEARGFILGTAFAQRMKLPMMMIRKKGKLPGPCFRESYKKEYGTDEFEVQEKALSKVVVKPSKKYHVLIMDDILAPGGTMAASIELTKKVLINNGIKDFKISTSLISSIKVLNGKEKIYEKYNDVSVDIIIEM</sequence>